<reference key="1">
    <citation type="submission" date="2006-10" db="EMBL/GenBank/DDBJ databases">
        <authorList>
            <consortium name="Sanger Xenopus tropicalis EST/cDNA project"/>
        </authorList>
    </citation>
    <scope>NUCLEOTIDE SEQUENCE [LARGE SCALE MRNA]</scope>
    <source>
        <tissue>Egg</tissue>
    </source>
</reference>
<protein>
    <recommendedName>
        <fullName>Protein phosphatase 1H</fullName>
        <ecNumber>3.1.3.16</ecNumber>
    </recommendedName>
</protein>
<organism>
    <name type="scientific">Xenopus tropicalis</name>
    <name type="common">Western clawed frog</name>
    <name type="synonym">Silurana tropicalis</name>
    <dbReference type="NCBI Taxonomy" id="8364"/>
    <lineage>
        <taxon>Eukaryota</taxon>
        <taxon>Metazoa</taxon>
        <taxon>Chordata</taxon>
        <taxon>Craniata</taxon>
        <taxon>Vertebrata</taxon>
        <taxon>Euteleostomi</taxon>
        <taxon>Amphibia</taxon>
        <taxon>Batrachia</taxon>
        <taxon>Anura</taxon>
        <taxon>Pipoidea</taxon>
        <taxon>Pipidae</taxon>
        <taxon>Xenopodinae</taxon>
        <taxon>Xenopus</taxon>
        <taxon>Silurana</taxon>
    </lineage>
</organism>
<keyword id="KW-0963">Cytoplasm</keyword>
<keyword id="KW-0378">Hydrolase</keyword>
<keyword id="KW-0539">Nucleus</keyword>
<keyword id="KW-0904">Protein phosphatase</keyword>
<keyword id="KW-1185">Reference proteome</keyword>
<gene>
    <name type="primary">ppm1h</name>
    <name type="ORF">TEgg016i20.1</name>
</gene>
<accession>Q28DF4</accession>
<feature type="chain" id="PRO_0000286607" description="Protein phosphatase 1H">
    <location>
        <begin position="1"/>
        <end position="510"/>
    </location>
</feature>
<feature type="domain" description="PPM-type phosphatase" evidence="2">
    <location>
        <begin position="73"/>
        <end position="503"/>
    </location>
</feature>
<feature type="region of interest" description="Disordered" evidence="3">
    <location>
        <begin position="105"/>
        <end position="128"/>
    </location>
</feature>
<feature type="region of interest" description="Disordered" evidence="3">
    <location>
        <begin position="188"/>
        <end position="225"/>
    </location>
</feature>
<dbReference type="EC" id="3.1.3.16"/>
<dbReference type="EMBL" id="CR855546">
    <property type="protein sequence ID" value="CAJ82033.1"/>
    <property type="molecule type" value="mRNA"/>
</dbReference>
<dbReference type="RefSeq" id="NP_001017305.1">
    <property type="nucleotide sequence ID" value="NM_001017305.2"/>
</dbReference>
<dbReference type="SMR" id="Q28DF4"/>
<dbReference type="FunCoup" id="Q28DF4">
    <property type="interactions" value="3177"/>
</dbReference>
<dbReference type="STRING" id="8364.ENSXETP00000039541"/>
<dbReference type="PaxDb" id="8364-ENSXETP00000040719"/>
<dbReference type="GeneID" id="550059"/>
<dbReference type="KEGG" id="xtr:550059"/>
<dbReference type="AGR" id="Xenbase:XB-GENE-5872503"/>
<dbReference type="CTD" id="57460"/>
<dbReference type="Xenbase" id="XB-GENE-5872503">
    <property type="gene designation" value="ppm1h"/>
</dbReference>
<dbReference type="eggNOG" id="KOG1323">
    <property type="taxonomic scope" value="Eukaryota"/>
</dbReference>
<dbReference type="InParanoid" id="Q28DF4"/>
<dbReference type="OMA" id="VMAGGSN"/>
<dbReference type="OrthoDB" id="10264738at2759"/>
<dbReference type="Proteomes" id="UP000008143">
    <property type="component" value="Chromosome 3"/>
</dbReference>
<dbReference type="Bgee" id="ENSXETG00000018793">
    <property type="expression patterns" value="Expressed in early embryo and 12 other cell types or tissues"/>
</dbReference>
<dbReference type="GO" id="GO:0005737">
    <property type="term" value="C:cytoplasm"/>
    <property type="evidence" value="ECO:0000250"/>
    <property type="project" value="UniProtKB"/>
</dbReference>
<dbReference type="GO" id="GO:0005634">
    <property type="term" value="C:nucleus"/>
    <property type="evidence" value="ECO:0000250"/>
    <property type="project" value="UniProtKB"/>
</dbReference>
<dbReference type="GO" id="GO:0004721">
    <property type="term" value="F:phosphoprotein phosphatase activity"/>
    <property type="evidence" value="ECO:0000250"/>
    <property type="project" value="UniProtKB"/>
</dbReference>
<dbReference type="GO" id="GO:0004722">
    <property type="term" value="F:protein serine/threonine phosphatase activity"/>
    <property type="evidence" value="ECO:0007669"/>
    <property type="project" value="UniProtKB-EC"/>
</dbReference>
<dbReference type="CDD" id="cd00143">
    <property type="entry name" value="PP2Cc"/>
    <property type="match status" value="1"/>
</dbReference>
<dbReference type="Gene3D" id="3.60.40.10">
    <property type="entry name" value="PPM-type phosphatase domain"/>
    <property type="match status" value="1"/>
</dbReference>
<dbReference type="InterPro" id="IPR015655">
    <property type="entry name" value="PP2C"/>
</dbReference>
<dbReference type="InterPro" id="IPR036457">
    <property type="entry name" value="PPM-type-like_dom_sf"/>
</dbReference>
<dbReference type="InterPro" id="IPR001932">
    <property type="entry name" value="PPM-type_phosphatase-like_dom"/>
</dbReference>
<dbReference type="PANTHER" id="PTHR13832:SF287">
    <property type="entry name" value="PROTEIN PHOSPHATASE 1H"/>
    <property type="match status" value="1"/>
</dbReference>
<dbReference type="PANTHER" id="PTHR13832">
    <property type="entry name" value="PROTEIN PHOSPHATASE 2C"/>
    <property type="match status" value="1"/>
</dbReference>
<dbReference type="Pfam" id="PF00481">
    <property type="entry name" value="PP2C"/>
    <property type="match status" value="2"/>
</dbReference>
<dbReference type="SMART" id="SM00332">
    <property type="entry name" value="PP2Cc"/>
    <property type="match status" value="1"/>
</dbReference>
<dbReference type="SUPFAM" id="SSF81606">
    <property type="entry name" value="PP2C-like"/>
    <property type="match status" value="1"/>
</dbReference>
<dbReference type="PROSITE" id="PS51746">
    <property type="entry name" value="PPM_2"/>
    <property type="match status" value="1"/>
</dbReference>
<proteinExistence type="evidence at transcript level"/>
<evidence type="ECO:0000250" key="1">
    <source>
        <dbReference type="UniProtKB" id="Q9ULR3"/>
    </source>
</evidence>
<evidence type="ECO:0000255" key="2">
    <source>
        <dbReference type="PROSITE-ProRule" id="PRU01082"/>
    </source>
</evidence>
<evidence type="ECO:0000256" key="3">
    <source>
        <dbReference type="SAM" id="MobiDB-lite"/>
    </source>
</evidence>
<evidence type="ECO:0000305" key="4"/>
<sequence length="510" mass="56461">MFTRVKSAVVSFMGGIMAGSSGLEHVNGSDLPVRFSYTRPEFLGLSPDEIECSADHIARPILILKETQRLPWSTGYAEVINAGKSTHNEDQASCEVVFVKKKSGVQSTPNKNSSSKRRSSLPNAEGLQLKDNQEVDGITFHYWALFDGHAGAGAAVVASKLLHHHIAEQIPDIIDILKNSAVLPPTCLGEEPESTSSNSRTLTRAASLRGGSGAPGSPSTPPTRFFTEKKIPHECLVIGALENAFKEMDLRIERERSTYSISGGCTALIVVYLLGKLYVANAGDSRAIIIRNGEIIPMSSEFTPETERQRLQYLAFLQPHLLGNEFTHLEFPRRVQRKEVGKMMLYRDFNMTGWAYKTIEENDLKFPLIYGEGKKARVMATIGVTRGLGDHDLKVHDSNIYIKPFLSSVPEVRVYDLVQHEHSADDVLVLATDGLWDVLFNEEVLEAVTSFLANCDPDDPHRYTLAAQDLVMRARGVLKDRGWRISNDRLGSGDDISVYVIPLEHGNRVS</sequence>
<name>PPM1H_XENTR</name>
<comment type="catalytic activity">
    <reaction>
        <text>O-phospho-L-seryl-[protein] + H2O = L-seryl-[protein] + phosphate</text>
        <dbReference type="Rhea" id="RHEA:20629"/>
        <dbReference type="Rhea" id="RHEA-COMP:9863"/>
        <dbReference type="Rhea" id="RHEA-COMP:11604"/>
        <dbReference type="ChEBI" id="CHEBI:15377"/>
        <dbReference type="ChEBI" id="CHEBI:29999"/>
        <dbReference type="ChEBI" id="CHEBI:43474"/>
        <dbReference type="ChEBI" id="CHEBI:83421"/>
        <dbReference type="EC" id="3.1.3.16"/>
    </reaction>
</comment>
<comment type="catalytic activity">
    <reaction>
        <text>O-phospho-L-threonyl-[protein] + H2O = L-threonyl-[protein] + phosphate</text>
        <dbReference type="Rhea" id="RHEA:47004"/>
        <dbReference type="Rhea" id="RHEA-COMP:11060"/>
        <dbReference type="Rhea" id="RHEA-COMP:11605"/>
        <dbReference type="ChEBI" id="CHEBI:15377"/>
        <dbReference type="ChEBI" id="CHEBI:30013"/>
        <dbReference type="ChEBI" id="CHEBI:43474"/>
        <dbReference type="ChEBI" id="CHEBI:61977"/>
        <dbReference type="EC" id="3.1.3.16"/>
    </reaction>
</comment>
<comment type="subcellular location">
    <subcellularLocation>
        <location evidence="1">Nucleus</location>
    </subcellularLocation>
    <subcellularLocation>
        <location evidence="1">Cytoplasm</location>
    </subcellularLocation>
</comment>
<comment type="similarity">
    <text evidence="4">Belongs to the PP2C family.</text>
</comment>